<proteinExistence type="evidence at protein level"/>
<name>DPGN_DIPMA</name>
<evidence type="ECO:0000255" key="1">
    <source>
        <dbReference type="PROSITE-ProRule" id="PRU00798"/>
    </source>
</evidence>
<evidence type="ECO:0000269" key="2">
    <source>
    </source>
</evidence>
<evidence type="ECO:0000269" key="3">
    <source>
    </source>
</evidence>
<evidence type="ECO:0000269" key="4">
    <source>
    </source>
</evidence>
<evidence type="ECO:0000305" key="5"/>
<evidence type="ECO:0000312" key="6">
    <source>
        <dbReference type="EMBL" id="CAA10384.1"/>
    </source>
</evidence>
<evidence type="ECO:0007829" key="7">
    <source>
        <dbReference type="PDB" id="1KMA"/>
    </source>
</evidence>
<protein>
    <recommendedName>
        <fullName>Serine protease inhibitor dipetalogastin</fullName>
        <shortName>Dipetalin</shortName>
    </recommendedName>
</protein>
<sequence>LIKELVNMVIQHAEEEEVKELKNPCECPRALHRVCGSDGNTYSNPCMLNCAKHEGNPDLVQVHKGPCDEHDHDFEDPCKCDNKFEPVCGDDQITYLNLCHLECATFTTSPGVEVAYEGECHAETTNAMEVLFQGNPCECPRALHRVCGSDGNTYSNPCMLTCAKHEGNPDLVQVHEGPCDEHDHDFEDTCQCDDTFQPVCGDDEITYRNLCHLECATFTTSPGVEVKHEGECHPETKVNQLILKSCMCPKIYKPVCGTDGRTYPNICVLKCHISSNPGLGLAHLGECKVAVLAKETGEVRNPCNCFRNFNPVCGTDGKTYGNLCMLGCAAETKVPGLKLLHNGRCLPKEQL</sequence>
<comment type="function">
    <text evidence="2 3 4">Thrombin inhibitor. Prevents blood clotting to allow insect to feed on blood. Also functions as an inhibitor of trypsin and plasmin.</text>
</comment>
<comment type="subcellular location">
    <subcellularLocation>
        <location>Secreted</location>
    </subcellularLocation>
</comment>
<comment type="sequence caution" evidence="5">
    <conflict type="erroneous initiation">
        <sequence resource="EMBL-CDS" id="CAA10384"/>
    </conflict>
</comment>
<keyword id="KW-0002">3D-structure</keyword>
<keyword id="KW-0903">Direct protein sequencing</keyword>
<keyword id="KW-1015">Disulfide bond</keyword>
<keyword id="KW-0646">Protease inhibitor</keyword>
<keyword id="KW-0677">Repeat</keyword>
<keyword id="KW-0964">Secreted</keyword>
<keyword id="KW-0722">Serine protease inhibitor</keyword>
<dbReference type="EMBL" id="AJ131524">
    <property type="protein sequence ID" value="CAA10384.1"/>
    <property type="status" value="ALT_INIT"/>
    <property type="molecule type" value="mRNA"/>
</dbReference>
<dbReference type="PDB" id="1KMA">
    <property type="method" value="NMR"/>
    <property type="chains" value="A=132-186"/>
</dbReference>
<dbReference type="PDBsum" id="1KMA"/>
<dbReference type="SMR" id="O96790"/>
<dbReference type="MEROPS" id="I01.022"/>
<dbReference type="MEROPS" id="I01.036"/>
<dbReference type="MEROPS" id="I01.038"/>
<dbReference type="MEROPS" id="I01.962"/>
<dbReference type="EvolutionaryTrace" id="O96790"/>
<dbReference type="GO" id="GO:0005576">
    <property type="term" value="C:extracellular region"/>
    <property type="evidence" value="ECO:0007669"/>
    <property type="project" value="UniProtKB-SubCell"/>
</dbReference>
<dbReference type="GO" id="GO:0004867">
    <property type="term" value="F:serine-type endopeptidase inhibitor activity"/>
    <property type="evidence" value="ECO:0000314"/>
    <property type="project" value="UniProtKB"/>
</dbReference>
<dbReference type="GO" id="GO:0050819">
    <property type="term" value="P:negative regulation of coagulation"/>
    <property type="evidence" value="ECO:0000314"/>
    <property type="project" value="UniProtKB"/>
</dbReference>
<dbReference type="CDD" id="cd00104">
    <property type="entry name" value="KAZAL_FS"/>
    <property type="match status" value="6"/>
</dbReference>
<dbReference type="FunFam" id="3.30.60.30:FF:000067">
    <property type="entry name" value="Thrombin inhibitor rhodniin"/>
    <property type="match status" value="6"/>
</dbReference>
<dbReference type="Gene3D" id="3.30.60.30">
    <property type="match status" value="6"/>
</dbReference>
<dbReference type="InterPro" id="IPR002350">
    <property type="entry name" value="Kazal_dom"/>
</dbReference>
<dbReference type="InterPro" id="IPR036058">
    <property type="entry name" value="Kazal_dom_sf"/>
</dbReference>
<dbReference type="InterPro" id="IPR039932">
    <property type="entry name" value="Spink4-like"/>
</dbReference>
<dbReference type="PANTHER" id="PTHR21179:SF0">
    <property type="entry name" value="SERINE PROTEASE INHIBITOR KAZAL-TYPE 4"/>
    <property type="match status" value="1"/>
</dbReference>
<dbReference type="PANTHER" id="PTHR21179">
    <property type="entry name" value="SERINE-TYPE ENDOPEPTIDASE INHIBITOR"/>
    <property type="match status" value="1"/>
</dbReference>
<dbReference type="Pfam" id="PF00050">
    <property type="entry name" value="Kazal_1"/>
    <property type="match status" value="4"/>
</dbReference>
<dbReference type="Pfam" id="PF07648">
    <property type="entry name" value="Kazal_2"/>
    <property type="match status" value="2"/>
</dbReference>
<dbReference type="SMART" id="SM00280">
    <property type="entry name" value="KAZAL"/>
    <property type="match status" value="6"/>
</dbReference>
<dbReference type="SUPFAM" id="SSF100895">
    <property type="entry name" value="Kazal-type serine protease inhibitors"/>
    <property type="match status" value="6"/>
</dbReference>
<dbReference type="PROSITE" id="PS00282">
    <property type="entry name" value="KAZAL_1"/>
    <property type="match status" value="6"/>
</dbReference>
<dbReference type="PROSITE" id="PS51465">
    <property type="entry name" value="KAZAL_2"/>
    <property type="match status" value="6"/>
</dbReference>
<accession>O96790</accession>
<organism evidence="6">
    <name type="scientific">Dipetalogaster maximus</name>
    <name type="common">Blood-sucking bug</name>
    <dbReference type="NCBI Taxonomy" id="72496"/>
    <lineage>
        <taxon>Eukaryota</taxon>
        <taxon>Metazoa</taxon>
        <taxon>Ecdysozoa</taxon>
        <taxon>Arthropoda</taxon>
        <taxon>Hexapoda</taxon>
        <taxon>Insecta</taxon>
        <taxon>Pterygota</taxon>
        <taxon>Neoptera</taxon>
        <taxon>Paraneoptera</taxon>
        <taxon>Hemiptera</taxon>
        <taxon>Heteroptera</taxon>
        <taxon>Panheteroptera</taxon>
        <taxon>Cimicomorpha</taxon>
        <taxon>Reduviidae</taxon>
        <taxon>Triatominae</taxon>
        <taxon>Dipetalogaster</taxon>
    </lineage>
</organism>
<reference evidence="5" key="1">
    <citation type="journal article" date="1999" name="Eur. J. Biochem.">
        <title>Dipetalogastin, a potent thrombin inhibitor from the blood-sucking insect Dipetalogaster maximus: cDNA cloning, expression, and characterization.</title>
        <authorList>
            <person name="Mende K."/>
            <person name="Petoukhova O."/>
            <person name="Koulitchkova V."/>
            <person name="Schaub G.A."/>
            <person name="Lange U."/>
            <person name="Kaufmann R."/>
            <person name="Nowak G."/>
        </authorList>
    </citation>
    <scope>NUCLEOTIDE SEQUENCE [MRNA]</scope>
    <source>
        <tissue>Stomach</tissue>
    </source>
</reference>
<reference evidence="5" key="2">
    <citation type="journal article" date="1999" name="Haemostasis">
        <title>Biochemical characterization of a thrombin inhibitor from the bloodsucking bug Dipetalogaster maximus.</title>
        <authorList>
            <person name="Lange U."/>
            <person name="Keilholz W."/>
            <person name="Schaub G.A."/>
            <person name="Landmann H."/>
            <person name="Markwardt F."/>
            <person name="Nowak G."/>
        </authorList>
    </citation>
    <scope>PROTEIN SEQUENCE OF 132-154</scope>
    <scope>FUNCTION</scope>
</reference>
<reference evidence="5" key="3">
    <citation type="journal article" date="2002" name="J. Mol. Biol.">
        <title>Interaction of Kazal-type inhibitor domains with serine proteinases: biochemical and structural studies.</title>
        <authorList>
            <person name="Schlott B."/>
            <person name="Woehnert J."/>
            <person name="Icke C."/>
            <person name="Hartmann M."/>
            <person name="Ramachandran R."/>
            <person name="Guehrs K.H."/>
            <person name="Glusa E."/>
            <person name="Flemming J."/>
            <person name="Goerlach M."/>
            <person name="Grosse F."/>
            <person name="Ohlenschlaeger O."/>
        </authorList>
    </citation>
    <scope>STRUCTURE BY NMR OF 133-186</scope>
</reference>
<feature type="propeptide" id="PRO_0000016580" evidence="3">
    <location>
        <begin position="1"/>
        <end position="131"/>
    </location>
</feature>
<feature type="chain" id="PRO_0000016581" description="Serine protease inhibitor dipetalogastin">
    <location>
        <begin position="132"/>
        <end position="351"/>
    </location>
</feature>
<feature type="domain" description="Kazal-like 1" evidence="1">
    <location>
        <begin position="19"/>
        <end position="69"/>
    </location>
</feature>
<feature type="domain" description="Kazal-like 2" evidence="1">
    <location>
        <begin position="72"/>
        <end position="122"/>
    </location>
</feature>
<feature type="domain" description="Kazal-like 3" evidence="1">
    <location>
        <begin position="131"/>
        <end position="181"/>
    </location>
</feature>
<feature type="domain" description="Kazal-like 4" evidence="1">
    <location>
        <begin position="184"/>
        <end position="234"/>
    </location>
</feature>
<feature type="domain" description="Kazal-like 5" evidence="1">
    <location>
        <begin position="240"/>
        <end position="289"/>
    </location>
</feature>
<feature type="domain" description="Kazal-like 6" evidence="1">
    <location>
        <begin position="297"/>
        <end position="347"/>
    </location>
</feature>
<feature type="site" description="Reactive bond" evidence="5">
    <location>
        <begin position="141"/>
        <end position="142"/>
    </location>
</feature>
<feature type="disulfide bond" evidence="1">
    <location>
        <begin position="25"/>
        <end position="50"/>
    </location>
</feature>
<feature type="disulfide bond" evidence="1">
    <location>
        <begin position="27"/>
        <end position="46"/>
    </location>
</feature>
<feature type="disulfide bond" evidence="1">
    <location>
        <begin position="35"/>
        <end position="67"/>
    </location>
</feature>
<feature type="disulfide bond" evidence="1">
    <location>
        <begin position="78"/>
        <end position="103"/>
    </location>
</feature>
<feature type="disulfide bond" evidence="1">
    <location>
        <begin position="80"/>
        <end position="99"/>
    </location>
</feature>
<feature type="disulfide bond" evidence="1">
    <location>
        <begin position="88"/>
        <end position="120"/>
    </location>
</feature>
<feature type="disulfide bond" evidence="1">
    <location>
        <begin position="137"/>
        <end position="162"/>
    </location>
</feature>
<feature type="disulfide bond" evidence="1">
    <location>
        <begin position="139"/>
        <end position="158"/>
    </location>
</feature>
<feature type="disulfide bond" evidence="1">
    <location>
        <begin position="147"/>
        <end position="179"/>
    </location>
</feature>
<feature type="disulfide bond" evidence="1">
    <location>
        <begin position="190"/>
        <end position="215"/>
    </location>
</feature>
<feature type="disulfide bond" evidence="1">
    <location>
        <begin position="192"/>
        <end position="211"/>
    </location>
</feature>
<feature type="disulfide bond" evidence="1">
    <location>
        <begin position="200"/>
        <end position="232"/>
    </location>
</feature>
<feature type="disulfide bond" evidence="1">
    <location>
        <begin position="246"/>
        <end position="271"/>
    </location>
</feature>
<feature type="disulfide bond" evidence="1">
    <location>
        <begin position="248"/>
        <end position="267"/>
    </location>
</feature>
<feature type="disulfide bond" evidence="1">
    <location>
        <begin position="256"/>
        <end position="287"/>
    </location>
</feature>
<feature type="disulfide bond" evidence="1">
    <location>
        <begin position="303"/>
        <end position="328"/>
    </location>
</feature>
<feature type="disulfide bond" evidence="1">
    <location>
        <begin position="305"/>
        <end position="324"/>
    </location>
</feature>
<feature type="disulfide bond" evidence="1">
    <location>
        <begin position="313"/>
        <end position="345"/>
    </location>
</feature>
<feature type="non-terminal residue">
    <location>
        <position position="1"/>
    </location>
</feature>
<feature type="strand" evidence="7">
    <location>
        <begin position="134"/>
        <end position="136"/>
    </location>
</feature>
<feature type="strand" evidence="7">
    <location>
        <begin position="153"/>
        <end position="155"/>
    </location>
</feature>
<feature type="helix" evidence="7">
    <location>
        <begin position="157"/>
        <end position="167"/>
    </location>
</feature>
<feature type="strand" evidence="7">
    <location>
        <begin position="175"/>
        <end position="177"/>
    </location>
</feature>
<feature type="strand" evidence="7">
    <location>
        <begin position="179"/>
        <end position="184"/>
    </location>
</feature>